<evidence type="ECO:0000255" key="1"/>
<evidence type="ECO:0000269" key="2">
    <source>
    </source>
</evidence>
<evidence type="ECO:0000303" key="3">
    <source>
    </source>
</evidence>
<evidence type="ECO:0000305" key="4"/>
<evidence type="ECO:0000312" key="5">
    <source>
        <dbReference type="EMBL" id="EAN76995.1"/>
    </source>
</evidence>
<evidence type="ECO:0000312" key="6">
    <source>
        <dbReference type="Proteomes" id="UP000008524"/>
    </source>
</evidence>
<name>TAX1_TRYB2</name>
<sequence length="363" mass="40685">MQGANLKVLPSTRAAAKELVDPLDITNVGWSTLEPKFDELMQLMDAPSSGINALAARSAHREKVGAVIEQLLTRAQDESRRLLVEGNGEAAAEAGVKTLRLKERFYGKGSVKLVPAHFHLARTNQFLKRYGNAEEILSLAHFIILQNPDEADATIKAELHQTFGLLYAADNKLDVSVKHLTCATYYLSVMNGPEHVLTTFAYFDLANVFATKACMEAAMALYDTVKNIWLKHLRRVLKDIVDETMAAKLVKRYDDDEVTHEVGHASARAFGKENLADVSKMLFGIFSIQKERLTISHPTTARAQFLLGLYLLWVNKNDEAAEHLLSARTTSQKFYGERHPIVQDIEDWCIWFEIPFRGVAAEQ</sequence>
<protein>
    <recommendedName>
        <fullName evidence="4">Protein TAX-1</fullName>
        <shortName evidence="3">TbTAX-1</shortName>
    </recommendedName>
</protein>
<organism evidence="6">
    <name type="scientific">Trypanosoma brucei brucei (strain 927/4 GUTat10.1)</name>
    <dbReference type="NCBI Taxonomy" id="185431"/>
    <lineage>
        <taxon>Eukaryota</taxon>
        <taxon>Discoba</taxon>
        <taxon>Euglenozoa</taxon>
        <taxon>Kinetoplastea</taxon>
        <taxon>Metakinetoplastina</taxon>
        <taxon>Trypanosomatida</taxon>
        <taxon>Trypanosomatidae</taxon>
        <taxon>Trypanosoma</taxon>
    </lineage>
</organism>
<accession>Q38DX5</accession>
<keyword id="KW-0002">3D-structure</keyword>
<keyword id="KW-0966">Cell projection</keyword>
<keyword id="KW-0969">Cilium</keyword>
<keyword id="KW-0963">Cytoplasm</keyword>
<keyword id="KW-0206">Cytoskeleton</keyword>
<keyword id="KW-0282">Flagellum</keyword>
<keyword id="KW-1185">Reference proteome</keyword>
<keyword id="KW-0677">Repeat</keyword>
<keyword id="KW-0802">TPR repeat</keyword>
<feature type="chain" id="PRO_0000460165" description="Protein TAX-1">
    <location>
        <begin position="1"/>
        <end position="363"/>
    </location>
</feature>
<feature type="repeat" description="TPR 1" evidence="1">
    <location>
        <begin position="157"/>
        <end position="190"/>
    </location>
</feature>
<feature type="repeat" description="TPR 2" evidence="1">
    <location>
        <begin position="199"/>
        <end position="232"/>
    </location>
</feature>
<feature type="region of interest" description="Required for localization to the flagellum and for flagellar motility" evidence="2">
    <location>
        <begin position="129"/>
        <end position="363"/>
    </location>
</feature>
<proteinExistence type="evidence at protein level"/>
<dbReference type="EMBL" id="CM000207">
    <property type="protein sequence ID" value="EAN76995.1"/>
    <property type="molecule type" value="Genomic_DNA"/>
</dbReference>
<dbReference type="RefSeq" id="XP_827325.1">
    <property type="nucleotide sequence ID" value="XM_822232.1"/>
</dbReference>
<dbReference type="PDB" id="9E5C">
    <property type="method" value="EM"/>
    <property type="resolution" value="3.20 A"/>
    <property type="chains" value="6q=1-363"/>
</dbReference>
<dbReference type="PDBsum" id="9E5C"/>
<dbReference type="EMDB" id="EMD-47524"/>
<dbReference type="SMR" id="Q38DX5"/>
<dbReference type="PaxDb" id="5691-EAN76995"/>
<dbReference type="GeneID" id="3660714"/>
<dbReference type="KEGG" id="tbr:Tb09.211.1790"/>
<dbReference type="VEuPathDB" id="TriTrypDB:Tb927.9.10370"/>
<dbReference type="eggNOG" id="ENOG502QSY3">
    <property type="taxonomic scope" value="Eukaryota"/>
</dbReference>
<dbReference type="InParanoid" id="Q38DX5"/>
<dbReference type="OMA" id="KEIWYAH"/>
<dbReference type="OrthoDB" id="674604at2759"/>
<dbReference type="Proteomes" id="UP000008524">
    <property type="component" value="Chromosome 9"/>
</dbReference>
<dbReference type="GO" id="GO:0005930">
    <property type="term" value="C:axoneme"/>
    <property type="evidence" value="ECO:0000314"/>
    <property type="project" value="UniProtKB"/>
</dbReference>
<dbReference type="GO" id="GO:0097014">
    <property type="term" value="C:ciliary plasm"/>
    <property type="evidence" value="ECO:0000314"/>
    <property type="project" value="GeneDB"/>
</dbReference>
<dbReference type="GO" id="GO:0005737">
    <property type="term" value="C:cytoplasm"/>
    <property type="evidence" value="ECO:0000314"/>
    <property type="project" value="GeneDB"/>
</dbReference>
<dbReference type="GO" id="GO:0031514">
    <property type="term" value="C:motile cilium"/>
    <property type="evidence" value="ECO:0007669"/>
    <property type="project" value="UniProtKB-KW"/>
</dbReference>
<dbReference type="GO" id="GO:0060285">
    <property type="term" value="P:cilium-dependent cell motility"/>
    <property type="evidence" value="ECO:0000315"/>
    <property type="project" value="UniProtKB"/>
</dbReference>
<dbReference type="Gene3D" id="1.25.40.10">
    <property type="entry name" value="Tetratricopeptide repeat domain"/>
    <property type="match status" value="2"/>
</dbReference>
<dbReference type="InterPro" id="IPR011990">
    <property type="entry name" value="TPR-like_helical_dom_sf"/>
</dbReference>
<dbReference type="InterPro" id="IPR053248">
    <property type="entry name" value="Zinc_finger_MYND_domain"/>
</dbReference>
<dbReference type="PANTHER" id="PTHR46533">
    <property type="entry name" value="ZINC FINGER MYND DOMAIN-CONTAINING PROTEIN 12"/>
    <property type="match status" value="1"/>
</dbReference>
<dbReference type="PANTHER" id="PTHR46533:SF1">
    <property type="entry name" value="ZINC FINGER MYND DOMAIN-CONTAINING PROTEIN 12"/>
    <property type="match status" value="1"/>
</dbReference>
<dbReference type="SUPFAM" id="SSF48452">
    <property type="entry name" value="TPR-like"/>
    <property type="match status" value="1"/>
</dbReference>
<reference evidence="6" key="1">
    <citation type="journal article" date="2005" name="Science">
        <title>The genome of the African trypanosome Trypanosoma brucei.</title>
        <authorList>
            <person name="Berriman M."/>
            <person name="Ghedin E."/>
            <person name="Hertz-Fowler C."/>
            <person name="Blandin G."/>
            <person name="Renauld H."/>
            <person name="Bartholomeu D.C."/>
            <person name="Lennard N.J."/>
            <person name="Caler E."/>
            <person name="Hamlin N.E."/>
            <person name="Haas B."/>
            <person name="Bohme U."/>
            <person name="Hannick L."/>
            <person name="Aslett M.A."/>
            <person name="Shallom J."/>
            <person name="Marcello L."/>
            <person name="Hou L."/>
            <person name="Wickstead B."/>
            <person name="Alsmark U.C.M."/>
            <person name="Arrowsmith C."/>
            <person name="Atkin R.J."/>
            <person name="Barron A.J."/>
            <person name="Bringaud F."/>
            <person name="Brooks K."/>
            <person name="Carrington M."/>
            <person name="Cherevach I."/>
            <person name="Chillingworth T.J."/>
            <person name="Churcher C."/>
            <person name="Clark L.N."/>
            <person name="Corton C.H."/>
            <person name="Cronin A."/>
            <person name="Davies R.M."/>
            <person name="Doggett J."/>
            <person name="Djikeng A."/>
            <person name="Feldblyum T."/>
            <person name="Field M.C."/>
            <person name="Fraser A."/>
            <person name="Goodhead I."/>
            <person name="Hance Z."/>
            <person name="Harper D."/>
            <person name="Harris B.R."/>
            <person name="Hauser H."/>
            <person name="Hostetler J."/>
            <person name="Ivens A."/>
            <person name="Jagels K."/>
            <person name="Johnson D."/>
            <person name="Johnson J."/>
            <person name="Jones K."/>
            <person name="Kerhornou A.X."/>
            <person name="Koo H."/>
            <person name="Larke N."/>
            <person name="Landfear S."/>
            <person name="Larkin C."/>
            <person name="Leech V."/>
            <person name="Line A."/>
            <person name="Lord A."/>
            <person name="Macleod A."/>
            <person name="Mooney P.J."/>
            <person name="Moule S."/>
            <person name="Martin D.M."/>
            <person name="Morgan G.W."/>
            <person name="Mungall K."/>
            <person name="Norbertczak H."/>
            <person name="Ormond D."/>
            <person name="Pai G."/>
            <person name="Peacock C.S."/>
            <person name="Peterson J."/>
            <person name="Quail M.A."/>
            <person name="Rabbinowitsch E."/>
            <person name="Rajandream M.A."/>
            <person name="Reitter C."/>
            <person name="Salzberg S.L."/>
            <person name="Sanders M."/>
            <person name="Schobel S."/>
            <person name="Sharp S."/>
            <person name="Simmonds M."/>
            <person name="Simpson A.J."/>
            <person name="Tallon L."/>
            <person name="Turner C.M."/>
            <person name="Tait A."/>
            <person name="Tivey A.R."/>
            <person name="Van Aken S."/>
            <person name="Walker D."/>
            <person name="Wanless D."/>
            <person name="Wang S."/>
            <person name="White B."/>
            <person name="White O."/>
            <person name="Whitehead S."/>
            <person name="Woodward J."/>
            <person name="Wortman J."/>
            <person name="Adams M.D."/>
            <person name="Embley T.M."/>
            <person name="Gull K."/>
            <person name="Ullu E."/>
            <person name="Barry J.D."/>
            <person name="Fairlamb A.H."/>
            <person name="Opperdoes F."/>
            <person name="Barrell B.G."/>
            <person name="Donelson J.E."/>
            <person name="Hall N."/>
            <person name="Fraser C.M."/>
            <person name="Melville S.E."/>
            <person name="El-Sayed N.M.A."/>
        </authorList>
    </citation>
    <scope>NUCLEOTIDE SEQUENCE [LARGE SCALE GENOMIC DNA]</scope>
    <source>
        <strain evidence="6">927/4 GUTat10.1</strain>
    </source>
</reference>
<reference evidence="4" key="2">
    <citation type="journal article" date="2023" name="Elife">
        <title>Novel axonemal protein ZMYND12 interacts with TTC29 and DNAH1, and is required for male fertility and flagellum function.</title>
        <authorList>
            <person name="Dacheux D."/>
            <person name="Martinez G."/>
            <person name="Broster Reix C.E."/>
            <person name="Beurois J."/>
            <person name="Lores P."/>
            <person name="Tounkara M."/>
            <person name="Dupuy J.W."/>
            <person name="Robinson D.R."/>
            <person name="Loeuillet C."/>
            <person name="Lambert E."/>
            <person name="Wehbe Z."/>
            <person name="Escoffier J."/>
            <person name="Amiri-Yekta A."/>
            <person name="Daneshipour A."/>
            <person name="Hosseini S.H."/>
            <person name="Zouari R."/>
            <person name="Mustapha S.F.B."/>
            <person name="Halouani L."/>
            <person name="Jiang X."/>
            <person name="Shen Y."/>
            <person name="Liu C."/>
            <person name="Thierry-Mieg N."/>
            <person name="Septier A."/>
            <person name="Bidart M."/>
            <person name="Satre V."/>
            <person name="Cazin C."/>
            <person name="Kherraf Z.E."/>
            <person name="Arnoult C."/>
            <person name="Ray P.F."/>
            <person name="Toure A."/>
            <person name="Bonhivers M."/>
            <person name="Coutton C."/>
        </authorList>
    </citation>
    <scope>FUNCTION</scope>
    <scope>INTERACTION WITH TTC29</scope>
    <scope>SUBCELLULAR LOCATION</scope>
    <scope>DEVELOPMENTAL STAGE</scope>
    <scope>DISRUPTION PHENOTYPE</scope>
</reference>
<gene>
    <name evidence="3" type="primary">TAX-1</name>
    <name evidence="5" type="ORF">Tb09.211.1790</name>
    <name evidence="3" type="ORF">Tb927.9.10370</name>
</gene>
<comment type="function">
    <text evidence="2">Required for flagellum motility.</text>
</comment>
<comment type="subunit">
    <text evidence="2">Interacts with TTC29.</text>
</comment>
<comment type="subcellular location">
    <subcellularLocation>
        <location evidence="2">Cytoplasm</location>
        <location evidence="2">Cytoskeleton</location>
        <location evidence="2">Flagellum axoneme</location>
    </subcellularLocation>
</comment>
<comment type="developmental stage">
    <text evidence="2">Expressed at all stages of the cell cycle.</text>
</comment>
<comment type="disruption phenotype">
    <text evidence="2">RNAi-mediated knockdown results in reduced mobility due to defective flagellar beating.</text>
</comment>